<name>BR2B_RANDY</name>
<comment type="function">
    <text evidence="2">Antimicrobial peptide. Active against the Gram-positive bacterium S.aureus (MIC=30 uM) and the Gram-negative bacterium E.coli (MIC=30 uM).</text>
</comment>
<comment type="subcellular location">
    <subcellularLocation>
        <location>Secreted</location>
    </subcellularLocation>
</comment>
<comment type="tissue specificity">
    <text>Expressed by the skin glands.</text>
</comment>
<comment type="mass spectrometry"/>
<comment type="similarity">
    <text evidence="3">Belongs to the frog skin active peptide (FSAP) family. Brevinin subfamily.</text>
</comment>
<evidence type="ECO:0000250" key="1"/>
<evidence type="ECO:0000269" key="2">
    <source>
    </source>
</evidence>
<evidence type="ECO:0000305" key="3"/>
<organism>
    <name type="scientific">Rana dybowskii</name>
    <name type="common">Dybovsky's frog</name>
    <name type="synonym">Korean brown frog</name>
    <dbReference type="NCBI Taxonomy" id="71582"/>
    <lineage>
        <taxon>Eukaryota</taxon>
        <taxon>Metazoa</taxon>
        <taxon>Chordata</taxon>
        <taxon>Craniata</taxon>
        <taxon>Vertebrata</taxon>
        <taxon>Euteleostomi</taxon>
        <taxon>Amphibia</taxon>
        <taxon>Batrachia</taxon>
        <taxon>Anura</taxon>
        <taxon>Neobatrachia</taxon>
        <taxon>Ranoidea</taxon>
        <taxon>Ranidae</taxon>
        <taxon>Rana</taxon>
        <taxon>Rana</taxon>
    </lineage>
</organism>
<feature type="peptide" id="PRO_0000311600" description="Brevinin-2DYb">
    <location>
        <begin position="1"/>
        <end position="33"/>
    </location>
</feature>
<feature type="disulfide bond" evidence="1">
    <location>
        <begin position="27"/>
        <end position="33"/>
    </location>
</feature>
<dbReference type="SMR" id="P0C5X2"/>
<dbReference type="GO" id="GO:0005576">
    <property type="term" value="C:extracellular region"/>
    <property type="evidence" value="ECO:0007669"/>
    <property type="project" value="UniProtKB-SubCell"/>
</dbReference>
<dbReference type="GO" id="GO:0042742">
    <property type="term" value="P:defense response to bacterium"/>
    <property type="evidence" value="ECO:0007669"/>
    <property type="project" value="UniProtKB-KW"/>
</dbReference>
<dbReference type="InterPro" id="IPR012521">
    <property type="entry name" value="Antimicrobial_frog_2"/>
</dbReference>
<dbReference type="Pfam" id="PF08023">
    <property type="entry name" value="Antimicrobial_2"/>
    <property type="match status" value="1"/>
</dbReference>
<keyword id="KW-0878">Amphibian defense peptide</keyword>
<keyword id="KW-0044">Antibiotic</keyword>
<keyword id="KW-0929">Antimicrobial</keyword>
<keyword id="KW-0903">Direct protein sequencing</keyword>
<keyword id="KW-1015">Disulfide bond</keyword>
<keyword id="KW-0964">Secreted</keyword>
<accession>P0C5X2</accession>
<protein>
    <recommendedName>
        <fullName>Brevinin-2DYb</fullName>
    </recommendedName>
</protein>
<reference key="1">
    <citation type="journal article" date="2007" name="Toxicon">
        <title>Cytolytic peptides belonging to the brevinin-1 and brevinin-2 families isolated from the skin of the Japanese brown frog, Rana dybowskii.</title>
        <authorList>
            <person name="Conlon J.M."/>
            <person name="Kolodziejek J."/>
            <person name="Nowotny N."/>
            <person name="Leprince J."/>
            <person name="Vaudry H."/>
            <person name="Coquet L."/>
            <person name="Jouenne T."/>
            <person name="Iwamuro S."/>
        </authorList>
    </citation>
    <scope>PROTEIN SEQUENCE</scope>
    <scope>FUNCTION</scope>
    <scope>MASS SPECTROMETRY</scope>
    <source>
        <tissue>Skin secretion</tissue>
    </source>
</reference>
<proteinExistence type="evidence at protein level"/>
<sequence>GLFDVVKGVLKGAGKNVAGSLLEQLKCKLSGGC</sequence>